<gene>
    <name type="primary">PNS1</name>
    <name type="ORF">FGRRES_06509</name>
    <name type="ORF">FGSG_06509</name>
</gene>
<comment type="function">
    <text evidence="1">Probably involved in transport through the plasma membrane.</text>
</comment>
<comment type="subcellular location">
    <subcellularLocation>
        <location evidence="1">Cell membrane</location>
        <topology evidence="1">Multi-pass membrane protein</topology>
    </subcellularLocation>
</comment>
<comment type="similarity">
    <text evidence="4">Belongs to the CTL (choline transporter-like) family.</text>
</comment>
<name>PNS1_GIBZE</name>
<accession>Q4I8E9</accession>
<accession>A0A098DTK2</accession>
<accession>A0A0E0SCJ5</accession>
<accession>V6RF65</accession>
<organism>
    <name type="scientific">Gibberella zeae (strain ATCC MYA-4620 / CBS 123657 / FGSC 9075 / NRRL 31084 / PH-1)</name>
    <name type="common">Wheat head blight fungus</name>
    <name type="synonym">Fusarium graminearum</name>
    <dbReference type="NCBI Taxonomy" id="229533"/>
    <lineage>
        <taxon>Eukaryota</taxon>
        <taxon>Fungi</taxon>
        <taxon>Dikarya</taxon>
        <taxon>Ascomycota</taxon>
        <taxon>Pezizomycotina</taxon>
        <taxon>Sordariomycetes</taxon>
        <taxon>Hypocreomycetidae</taxon>
        <taxon>Hypocreales</taxon>
        <taxon>Nectriaceae</taxon>
        <taxon>Fusarium</taxon>
    </lineage>
</organism>
<proteinExistence type="inferred from homology"/>
<keyword id="KW-1003">Cell membrane</keyword>
<keyword id="KW-0325">Glycoprotein</keyword>
<keyword id="KW-0472">Membrane</keyword>
<keyword id="KW-1185">Reference proteome</keyword>
<keyword id="KW-0812">Transmembrane</keyword>
<keyword id="KW-1133">Transmembrane helix</keyword>
<keyword id="KW-0813">Transport</keyword>
<feature type="chain" id="PRO_0000191735" description="Protein PNS1">
    <location>
        <begin position="1"/>
        <end position="538"/>
    </location>
</feature>
<feature type="topological domain" description="Cytoplasmic" evidence="2">
    <location>
        <begin position="1"/>
        <end position="88"/>
    </location>
</feature>
<feature type="transmembrane region" description="Helical" evidence="2">
    <location>
        <begin position="89"/>
        <end position="109"/>
    </location>
</feature>
<feature type="topological domain" description="Extracellular" evidence="2">
    <location>
        <begin position="110"/>
        <end position="137"/>
    </location>
</feature>
<feature type="transmembrane region" description="Helical" evidence="2">
    <location>
        <begin position="138"/>
        <end position="158"/>
    </location>
</feature>
<feature type="topological domain" description="Cytoplasmic" evidence="2">
    <location>
        <begin position="159"/>
        <end position="165"/>
    </location>
</feature>
<feature type="transmembrane region" description="Helical" evidence="2">
    <location>
        <begin position="166"/>
        <end position="186"/>
    </location>
</feature>
<feature type="topological domain" description="Extracellular" evidence="2">
    <location>
        <begin position="187"/>
        <end position="191"/>
    </location>
</feature>
<feature type="transmembrane region" description="Helical" evidence="2">
    <location>
        <begin position="192"/>
        <end position="212"/>
    </location>
</feature>
<feature type="topological domain" description="Cytoplasmic" evidence="2">
    <location>
        <begin position="213"/>
        <end position="239"/>
    </location>
</feature>
<feature type="transmembrane region" description="Helical" evidence="2">
    <location>
        <begin position="240"/>
        <end position="260"/>
    </location>
</feature>
<feature type="topological domain" description="Extracellular" evidence="2">
    <location>
        <begin position="261"/>
        <end position="280"/>
    </location>
</feature>
<feature type="transmembrane region" description="Helical" evidence="2">
    <location>
        <begin position="281"/>
        <end position="301"/>
    </location>
</feature>
<feature type="topological domain" description="Cytoplasmic" evidence="2">
    <location>
        <begin position="302"/>
        <end position="335"/>
    </location>
</feature>
<feature type="transmembrane region" description="Helical" evidence="2">
    <location>
        <begin position="336"/>
        <end position="356"/>
    </location>
</feature>
<feature type="topological domain" description="Extracellular" evidence="2">
    <location>
        <begin position="357"/>
        <end position="372"/>
    </location>
</feature>
<feature type="transmembrane region" description="Helical" evidence="2">
    <location>
        <begin position="373"/>
        <end position="393"/>
    </location>
</feature>
<feature type="topological domain" description="Cytoplasmic" evidence="2">
    <location>
        <begin position="394"/>
        <end position="434"/>
    </location>
</feature>
<feature type="transmembrane region" description="Helical" evidence="2">
    <location>
        <begin position="435"/>
        <end position="455"/>
    </location>
</feature>
<feature type="topological domain" description="Extracellular" evidence="2">
    <location>
        <begin position="456"/>
        <end position="474"/>
    </location>
</feature>
<feature type="transmembrane region" description="Helical" evidence="2">
    <location>
        <begin position="475"/>
        <end position="495"/>
    </location>
</feature>
<feature type="topological domain" description="Cytoplasmic" evidence="2">
    <location>
        <begin position="496"/>
        <end position="538"/>
    </location>
</feature>
<feature type="region of interest" description="Disordered" evidence="3">
    <location>
        <begin position="1"/>
        <end position="67"/>
    </location>
</feature>
<feature type="compositionally biased region" description="Low complexity" evidence="3">
    <location>
        <begin position="1"/>
        <end position="54"/>
    </location>
</feature>
<feature type="glycosylation site" description="N-linked (GlcNAc...) asparagine" evidence="2">
    <location>
        <position position="134"/>
    </location>
</feature>
<reference key="1">
    <citation type="journal article" date="2007" name="Science">
        <title>The Fusarium graminearum genome reveals a link between localized polymorphism and pathogen specialization.</title>
        <authorList>
            <person name="Cuomo C.A."/>
            <person name="Gueldener U."/>
            <person name="Xu J.-R."/>
            <person name="Trail F."/>
            <person name="Turgeon B.G."/>
            <person name="Di Pietro A."/>
            <person name="Walton J.D."/>
            <person name="Ma L.-J."/>
            <person name="Baker S.E."/>
            <person name="Rep M."/>
            <person name="Adam G."/>
            <person name="Antoniw J."/>
            <person name="Baldwin T."/>
            <person name="Calvo S.E."/>
            <person name="Chang Y.-L."/>
            <person name="DeCaprio D."/>
            <person name="Gale L.R."/>
            <person name="Gnerre S."/>
            <person name="Goswami R.S."/>
            <person name="Hammond-Kosack K."/>
            <person name="Harris L.J."/>
            <person name="Hilburn K."/>
            <person name="Kennell J.C."/>
            <person name="Kroken S."/>
            <person name="Magnuson J.K."/>
            <person name="Mannhaupt G."/>
            <person name="Mauceli E.W."/>
            <person name="Mewes H.-W."/>
            <person name="Mitterbauer R."/>
            <person name="Muehlbauer G."/>
            <person name="Muensterkoetter M."/>
            <person name="Nelson D."/>
            <person name="O'Donnell K."/>
            <person name="Ouellet T."/>
            <person name="Qi W."/>
            <person name="Quesneville H."/>
            <person name="Roncero M.I.G."/>
            <person name="Seong K.-Y."/>
            <person name="Tetko I.V."/>
            <person name="Urban M."/>
            <person name="Waalwijk C."/>
            <person name="Ward T.J."/>
            <person name="Yao J."/>
            <person name="Birren B.W."/>
            <person name="Kistler H.C."/>
        </authorList>
    </citation>
    <scope>NUCLEOTIDE SEQUENCE [LARGE SCALE GENOMIC DNA]</scope>
    <source>
        <strain>ATCC MYA-4620 / CBS 123657 / FGSC 9075 / NRRL 31084 / PH-1</strain>
    </source>
</reference>
<reference key="2">
    <citation type="journal article" date="2010" name="Nature">
        <title>Comparative genomics reveals mobile pathogenicity chromosomes in Fusarium.</title>
        <authorList>
            <person name="Ma L.-J."/>
            <person name="van der Does H.C."/>
            <person name="Borkovich K.A."/>
            <person name="Coleman J.J."/>
            <person name="Daboussi M.-J."/>
            <person name="Di Pietro A."/>
            <person name="Dufresne M."/>
            <person name="Freitag M."/>
            <person name="Grabherr M."/>
            <person name="Henrissat B."/>
            <person name="Houterman P.M."/>
            <person name="Kang S."/>
            <person name="Shim W.-B."/>
            <person name="Woloshuk C."/>
            <person name="Xie X."/>
            <person name="Xu J.-R."/>
            <person name="Antoniw J."/>
            <person name="Baker S.E."/>
            <person name="Bluhm B.H."/>
            <person name="Breakspear A."/>
            <person name="Brown D.W."/>
            <person name="Butchko R.A.E."/>
            <person name="Chapman S."/>
            <person name="Coulson R."/>
            <person name="Coutinho P.M."/>
            <person name="Danchin E.G.J."/>
            <person name="Diener A."/>
            <person name="Gale L.R."/>
            <person name="Gardiner D.M."/>
            <person name="Goff S."/>
            <person name="Hammond-Kosack K.E."/>
            <person name="Hilburn K."/>
            <person name="Hua-Van A."/>
            <person name="Jonkers W."/>
            <person name="Kazan K."/>
            <person name="Kodira C.D."/>
            <person name="Koehrsen M."/>
            <person name="Kumar L."/>
            <person name="Lee Y.-H."/>
            <person name="Li L."/>
            <person name="Manners J.M."/>
            <person name="Miranda-Saavedra D."/>
            <person name="Mukherjee M."/>
            <person name="Park G."/>
            <person name="Park J."/>
            <person name="Park S.-Y."/>
            <person name="Proctor R.H."/>
            <person name="Regev A."/>
            <person name="Ruiz-Roldan M.C."/>
            <person name="Sain D."/>
            <person name="Sakthikumar S."/>
            <person name="Sykes S."/>
            <person name="Schwartz D.C."/>
            <person name="Turgeon B.G."/>
            <person name="Wapinski I."/>
            <person name="Yoder O."/>
            <person name="Young S."/>
            <person name="Zeng Q."/>
            <person name="Zhou S."/>
            <person name="Galagan J."/>
            <person name="Cuomo C.A."/>
            <person name="Kistler H.C."/>
            <person name="Rep M."/>
        </authorList>
    </citation>
    <scope>GENOME REANNOTATION</scope>
    <source>
        <strain>ATCC MYA-4620 / CBS 123657 / FGSC 9075 / NRRL 31084 / PH-1</strain>
    </source>
</reference>
<reference key="3">
    <citation type="journal article" date="2015" name="BMC Genomics">
        <title>The completed genome sequence of the pathogenic ascomycete fungus Fusarium graminearum.</title>
        <authorList>
            <person name="King R."/>
            <person name="Urban M."/>
            <person name="Hammond-Kosack M.C.U."/>
            <person name="Hassani-Pak K."/>
            <person name="Hammond-Kosack K.E."/>
        </authorList>
    </citation>
    <scope>NUCLEOTIDE SEQUENCE [LARGE SCALE GENOMIC DNA]</scope>
    <source>
        <strain>ATCC MYA-4620 / CBS 123657 / FGSC 9075 / NRRL 31084 / PH-1</strain>
    </source>
</reference>
<sequence length="538" mass="60024">MGESDAYYNGGQQQQYNGGYQQQYQPQPPAASYQAPPQQPYQQQPYQQGPPQNGTGNGNGYMPAQGYNANEKGSFDEQFKIAKPKYNDLWAGILLILVFAGFVVVSGLALQGYSANKGNAGDGIYNNKNDFSPNTSTVILFMFVLAVAFVLSYAYVWMARLFPKQFIWVTGILNVCWAIGTAIFYLWRKYWSAGIVFLIFGLFMAFCFWTWISRIPFSALMLKTTIDVSKKYGHVYLVSLIGGIIATAFSAWYAITLVGIYVKYQPAQDNPSCADGGCGKGKVIGLIAFITFAMYWFSEWLKNTIHTTIAGVYGSWYFNPHNFPKDATRASAKRALTYSFGSIALGSLLVAIIQFLRQICNAARNQEGADGSFVGYAIFCCISCLLGLLEWAVEFINRYAFCHIALYGKAYFAAAKDTWKMIKDRGIDALINDCLIGPVLSFGALFIAYACALLAYLYLYFTDPAYNSDGQYTAVVMAFSFLIGFQIANVFTTPISSGIETIFVAAGWDPQVMWRDHPELYNEMVRVYPKVQQVIKDR</sequence>
<dbReference type="EMBL" id="DS231666">
    <property type="protein sequence ID" value="ESU12612.1"/>
    <property type="molecule type" value="Genomic_DNA"/>
</dbReference>
<dbReference type="EMBL" id="HG970335">
    <property type="protein sequence ID" value="CEF84158.1"/>
    <property type="molecule type" value="Genomic_DNA"/>
</dbReference>
<dbReference type="RefSeq" id="XP_011326119.1">
    <property type="nucleotide sequence ID" value="XM_011327817.1"/>
</dbReference>
<dbReference type="SMR" id="Q4I8E9"/>
<dbReference type="FunCoup" id="Q4I8E9">
    <property type="interactions" value="249"/>
</dbReference>
<dbReference type="STRING" id="229533.Q4I8E9"/>
<dbReference type="GlyCosmos" id="Q4I8E9">
    <property type="glycosylation" value="1 site, No reported glycans"/>
</dbReference>
<dbReference type="GeneID" id="23553639"/>
<dbReference type="KEGG" id="fgr:FGSG_06509"/>
<dbReference type="VEuPathDB" id="FungiDB:FGRAMPH1_01G22471"/>
<dbReference type="eggNOG" id="KOG1362">
    <property type="taxonomic scope" value="Eukaryota"/>
</dbReference>
<dbReference type="HOGENOM" id="CLU_026724_0_0_1"/>
<dbReference type="InParanoid" id="Q4I8E9"/>
<dbReference type="OrthoDB" id="106905at110618"/>
<dbReference type="Proteomes" id="UP000070720">
    <property type="component" value="Chromosome 4"/>
</dbReference>
<dbReference type="GO" id="GO:0005886">
    <property type="term" value="C:plasma membrane"/>
    <property type="evidence" value="ECO:0007669"/>
    <property type="project" value="UniProtKB-SubCell"/>
</dbReference>
<dbReference type="GO" id="GO:0022857">
    <property type="term" value="F:transmembrane transporter activity"/>
    <property type="evidence" value="ECO:0007669"/>
    <property type="project" value="InterPro"/>
</dbReference>
<dbReference type="InterPro" id="IPR007603">
    <property type="entry name" value="Choline_transptr-like"/>
</dbReference>
<dbReference type="PANTHER" id="PTHR12385">
    <property type="entry name" value="CHOLINE TRANSPORTER-LIKE (SLC FAMILY 44)"/>
    <property type="match status" value="1"/>
</dbReference>
<dbReference type="PANTHER" id="PTHR12385:SF4">
    <property type="entry name" value="PROTEIN PNS1"/>
    <property type="match status" value="1"/>
</dbReference>
<dbReference type="Pfam" id="PF04515">
    <property type="entry name" value="Choline_transpo"/>
    <property type="match status" value="1"/>
</dbReference>
<protein>
    <recommendedName>
        <fullName>Protein PNS1</fullName>
    </recommendedName>
</protein>
<evidence type="ECO:0000250" key="1"/>
<evidence type="ECO:0000255" key="2"/>
<evidence type="ECO:0000256" key="3">
    <source>
        <dbReference type="SAM" id="MobiDB-lite"/>
    </source>
</evidence>
<evidence type="ECO:0000305" key="4"/>